<accession>Q7A774</accession>
<organism>
    <name type="scientific">Staphylococcus aureus (strain N315)</name>
    <dbReference type="NCBI Taxonomy" id="158879"/>
    <lineage>
        <taxon>Bacteria</taxon>
        <taxon>Bacillati</taxon>
        <taxon>Bacillota</taxon>
        <taxon>Bacilli</taxon>
        <taxon>Bacillales</taxon>
        <taxon>Staphylococcaceae</taxon>
        <taxon>Staphylococcus</taxon>
    </lineage>
</organism>
<proteinExistence type="evidence at protein level"/>
<dbReference type="EC" id="4.1.2.43"/>
<dbReference type="EMBL" id="BA000018">
    <property type="protein sequence ID" value="BAB41759.1"/>
    <property type="molecule type" value="Genomic_DNA"/>
</dbReference>
<dbReference type="PIR" id="D89825">
    <property type="entry name" value="D89825"/>
</dbReference>
<dbReference type="SMR" id="Q7A774"/>
<dbReference type="EnsemblBacteria" id="BAB41759">
    <property type="protein sequence ID" value="BAB41759"/>
    <property type="gene ID" value="BAB41759"/>
</dbReference>
<dbReference type="KEGG" id="sau:SA0528"/>
<dbReference type="HOGENOM" id="CLU_081825_1_0_9"/>
<dbReference type="UniPathway" id="UPA00294">
    <property type="reaction ID" value="UER00434"/>
</dbReference>
<dbReference type="GO" id="GO:0033982">
    <property type="term" value="F:3-dehydro-L-gulonate-6-phosphate decarboxylase activity"/>
    <property type="evidence" value="ECO:0007669"/>
    <property type="project" value="TreeGrafter"/>
</dbReference>
<dbReference type="GO" id="GO:0043801">
    <property type="term" value="F:hexulose-6-phosphate synthase activity"/>
    <property type="evidence" value="ECO:0007669"/>
    <property type="project" value="UniProtKB-EC"/>
</dbReference>
<dbReference type="GO" id="GO:0004590">
    <property type="term" value="F:orotidine-5'-phosphate decarboxylase activity"/>
    <property type="evidence" value="ECO:0007669"/>
    <property type="project" value="InterPro"/>
</dbReference>
<dbReference type="GO" id="GO:0006207">
    <property type="term" value="P:'de novo' pyrimidine nucleobase biosynthetic process"/>
    <property type="evidence" value="ECO:0007669"/>
    <property type="project" value="InterPro"/>
</dbReference>
<dbReference type="GO" id="GO:0019647">
    <property type="term" value="P:formaldehyde assimilation via ribulose monophosphate cycle"/>
    <property type="evidence" value="ECO:0007669"/>
    <property type="project" value="UniProtKB-UniPathway"/>
</dbReference>
<dbReference type="GO" id="GO:0019854">
    <property type="term" value="P:L-ascorbic acid catabolic process"/>
    <property type="evidence" value="ECO:0007669"/>
    <property type="project" value="TreeGrafter"/>
</dbReference>
<dbReference type="GO" id="GO:0006730">
    <property type="term" value="P:one-carbon metabolic process"/>
    <property type="evidence" value="ECO:0007669"/>
    <property type="project" value="UniProtKB-KW"/>
</dbReference>
<dbReference type="CDD" id="cd04726">
    <property type="entry name" value="KGPDC_HPS"/>
    <property type="match status" value="1"/>
</dbReference>
<dbReference type="FunFam" id="3.20.20.70:FF:000022">
    <property type="entry name" value="3-keto-L-gulonate-6-phosphate decarboxylase UlaD"/>
    <property type="match status" value="1"/>
</dbReference>
<dbReference type="Gene3D" id="3.20.20.70">
    <property type="entry name" value="Aldolase class I"/>
    <property type="match status" value="1"/>
</dbReference>
<dbReference type="InterPro" id="IPR017553">
    <property type="entry name" value="3-hexulose-6-phosphate_synth"/>
</dbReference>
<dbReference type="InterPro" id="IPR013785">
    <property type="entry name" value="Aldolase_TIM"/>
</dbReference>
<dbReference type="InterPro" id="IPR041710">
    <property type="entry name" value="HPS/KGPDC"/>
</dbReference>
<dbReference type="InterPro" id="IPR001754">
    <property type="entry name" value="OMPdeCOase_dom"/>
</dbReference>
<dbReference type="InterPro" id="IPR011060">
    <property type="entry name" value="RibuloseP-bd_barrel"/>
</dbReference>
<dbReference type="NCBIfam" id="TIGR03128">
    <property type="entry name" value="RuMP_HxlA"/>
    <property type="match status" value="1"/>
</dbReference>
<dbReference type="PANTHER" id="PTHR35039">
    <property type="entry name" value="3-KETO-L-GULONATE-6-PHOSPHATE DECARBOXYLASE SGBH-RELATED"/>
    <property type="match status" value="1"/>
</dbReference>
<dbReference type="PANTHER" id="PTHR35039:SF3">
    <property type="entry name" value="3-KETO-L-GULONATE-6-PHOSPHATE DECARBOXYLASE SGBH-RELATED"/>
    <property type="match status" value="1"/>
</dbReference>
<dbReference type="Pfam" id="PF00215">
    <property type="entry name" value="OMPdecase"/>
    <property type="match status" value="1"/>
</dbReference>
<dbReference type="SMART" id="SM00934">
    <property type="entry name" value="OMPdecase"/>
    <property type="match status" value="1"/>
</dbReference>
<dbReference type="SUPFAM" id="SSF51366">
    <property type="entry name" value="Ribulose-phoshate binding barrel"/>
    <property type="match status" value="1"/>
</dbReference>
<gene>
    <name type="ordered locus">SA0528</name>
</gene>
<protein>
    <recommendedName>
        <fullName>3-hexulose-6-phosphate synthase</fullName>
        <shortName>HPS</shortName>
        <ecNumber>4.1.2.43</ecNumber>
    </recommendedName>
    <alternativeName>
        <fullName>D-arabino-3-hexulose-6-phosphate formaldehyde lyase</fullName>
    </alternativeName>
</protein>
<sequence>MELQLAIDLLNKEDAAELANKVKDYVDIVEIGTPIIYNEGLPAVKHMADNISNVKVLADMKIMDAADYEVSQAIKFGADVITILGVAEDASIKAAIEEAHKNNKQLLVDMIAVQDLEKRAKELDEMGADYIAVHTGYDLQAEGQSPLESLRTVKSVIKNSKVAVAGGIKPDTIKDIVAESPDLVIVGGGIANADDPVEAAKQCRAAIEGK</sequence>
<comment type="function">
    <text evidence="1">Catalyzes the condensation of ribulose 5-phosphate with formaldehyde to form 3-hexulose 6-phosphate.</text>
</comment>
<comment type="catalytic activity">
    <reaction>
        <text>D-ribulose 5-phosphate + formaldehyde = D-arabino-hex-3-ulose 6-phosphate</text>
        <dbReference type="Rhea" id="RHEA:25201"/>
        <dbReference type="ChEBI" id="CHEBI:16842"/>
        <dbReference type="ChEBI" id="CHEBI:58121"/>
        <dbReference type="ChEBI" id="CHEBI:58542"/>
        <dbReference type="EC" id="4.1.2.43"/>
    </reaction>
</comment>
<comment type="pathway">
    <text>One-carbon metabolism; formaldehyde assimilation via RuMP pathway; D-fructose 6-phosphate from D-ribulose 5-phosphate and formaldehyde: step 1/2.</text>
</comment>
<comment type="similarity">
    <text evidence="2">Belongs to the HPS/KGPDC family. HPS subfamily.</text>
</comment>
<reference key="1">
    <citation type="journal article" date="2001" name="Lancet">
        <title>Whole genome sequencing of meticillin-resistant Staphylococcus aureus.</title>
        <authorList>
            <person name="Kuroda M."/>
            <person name="Ohta T."/>
            <person name="Uchiyama I."/>
            <person name="Baba T."/>
            <person name="Yuzawa H."/>
            <person name="Kobayashi I."/>
            <person name="Cui L."/>
            <person name="Oguchi A."/>
            <person name="Aoki K."/>
            <person name="Nagai Y."/>
            <person name="Lian J.-Q."/>
            <person name="Ito T."/>
            <person name="Kanamori M."/>
            <person name="Matsumaru H."/>
            <person name="Maruyama A."/>
            <person name="Murakami H."/>
            <person name="Hosoyama A."/>
            <person name="Mizutani-Ui Y."/>
            <person name="Takahashi N.K."/>
            <person name="Sawano T."/>
            <person name="Inoue R."/>
            <person name="Kaito C."/>
            <person name="Sekimizu K."/>
            <person name="Hirakawa H."/>
            <person name="Kuhara S."/>
            <person name="Goto S."/>
            <person name="Yabuzaki J."/>
            <person name="Kanehisa M."/>
            <person name="Yamashita A."/>
            <person name="Oshima K."/>
            <person name="Furuya K."/>
            <person name="Yoshino C."/>
            <person name="Shiba T."/>
            <person name="Hattori M."/>
            <person name="Ogasawara N."/>
            <person name="Hayashi H."/>
            <person name="Hiramatsu K."/>
        </authorList>
    </citation>
    <scope>NUCLEOTIDE SEQUENCE [LARGE SCALE GENOMIC DNA]</scope>
    <source>
        <strain>N315</strain>
    </source>
</reference>
<reference key="2">
    <citation type="journal article" date="2005" name="J. Microbiol. Methods">
        <title>Correlation of proteomic and transcriptomic profiles of Staphylococcus aureus during the post-exponential phase of growth.</title>
        <authorList>
            <person name="Scherl A."/>
            <person name="Francois P."/>
            <person name="Bento M."/>
            <person name="Deshusses J.M."/>
            <person name="Charbonnier Y."/>
            <person name="Converset V."/>
            <person name="Huyghe A."/>
            <person name="Walter N."/>
            <person name="Hoogland C."/>
            <person name="Appel R.D."/>
            <person name="Sanchez J.-C."/>
            <person name="Zimmermann-Ivol C.G."/>
            <person name="Corthals G.L."/>
            <person name="Hochstrasser D.F."/>
            <person name="Schrenzel J."/>
        </authorList>
    </citation>
    <scope>IDENTIFICATION BY MASS SPECTROMETRY</scope>
    <source>
        <strain>N315</strain>
    </source>
</reference>
<reference key="3">
    <citation type="submission" date="2007-10" db="UniProtKB">
        <title>Shotgun proteomic analysis of total and membrane protein extracts of S. aureus strain N315.</title>
        <authorList>
            <person name="Vaezzadeh A.R."/>
            <person name="Deshusses J."/>
            <person name="Lescuyer P."/>
            <person name="Hochstrasser D.F."/>
        </authorList>
    </citation>
    <scope>IDENTIFICATION BY MASS SPECTROMETRY [LARGE SCALE ANALYSIS]</scope>
    <source>
        <strain>N315</strain>
    </source>
</reference>
<evidence type="ECO:0000250" key="1"/>
<evidence type="ECO:0000305" key="2"/>
<keyword id="KW-0119">Carbohydrate metabolism</keyword>
<keyword id="KW-0456">Lyase</keyword>
<keyword id="KW-0554">One-carbon metabolism</keyword>
<feature type="chain" id="PRO_0000269520" description="3-hexulose-6-phosphate synthase">
    <location>
        <begin position="1"/>
        <end position="210"/>
    </location>
</feature>
<name>HPS_STAAN</name>